<feature type="chain" id="PRO_1000088873" description="Ribosome-binding factor A">
    <location>
        <begin position="1"/>
        <end position="123"/>
    </location>
</feature>
<proteinExistence type="inferred from homology"/>
<evidence type="ECO:0000255" key="1">
    <source>
        <dbReference type="HAMAP-Rule" id="MF_00003"/>
    </source>
</evidence>
<protein>
    <recommendedName>
        <fullName evidence="1">Ribosome-binding factor A</fullName>
    </recommendedName>
</protein>
<sequence length="123" mass="14061">MAENRRMKKVNAMLREAIAKVILKDVKHPKISNRWITITRVSLSRDLQSACVYVSIMPHENSQEETLAALKASAGFIAFQASKDLVLKYFPDLNFYVEDIFSPQDHIESLLLKIAEQDKKTNP</sequence>
<organism>
    <name type="scientific">Chlamydia trachomatis serovar L2b (strain UCH-1/proctitis)</name>
    <dbReference type="NCBI Taxonomy" id="471473"/>
    <lineage>
        <taxon>Bacteria</taxon>
        <taxon>Pseudomonadati</taxon>
        <taxon>Chlamydiota</taxon>
        <taxon>Chlamydiia</taxon>
        <taxon>Chlamydiales</taxon>
        <taxon>Chlamydiaceae</taxon>
        <taxon>Chlamydia/Chlamydophila group</taxon>
        <taxon>Chlamydia</taxon>
    </lineage>
</organism>
<name>RBFA_CHLTB</name>
<keyword id="KW-0963">Cytoplasm</keyword>
<keyword id="KW-0690">Ribosome biogenesis</keyword>
<accession>B0BB82</accession>
<reference key="1">
    <citation type="journal article" date="2008" name="Genome Res.">
        <title>Chlamydia trachomatis: genome sequence analysis of lymphogranuloma venereum isolates.</title>
        <authorList>
            <person name="Thomson N.R."/>
            <person name="Holden M.T.G."/>
            <person name="Carder C."/>
            <person name="Lennard N."/>
            <person name="Lockey S.J."/>
            <person name="Marsh P."/>
            <person name="Skipp P."/>
            <person name="O'Connor C.D."/>
            <person name="Goodhead I."/>
            <person name="Norbertzcak H."/>
            <person name="Harris B."/>
            <person name="Ormond D."/>
            <person name="Rance R."/>
            <person name="Quail M.A."/>
            <person name="Parkhill J."/>
            <person name="Stephens R.S."/>
            <person name="Clarke I.N."/>
        </authorList>
    </citation>
    <scope>NUCLEOTIDE SEQUENCE [LARGE SCALE GENOMIC DNA]</scope>
    <source>
        <strain>UCH-1/proctitis</strain>
    </source>
</reference>
<dbReference type="EMBL" id="AM884177">
    <property type="protein sequence ID" value="CAP06744.1"/>
    <property type="molecule type" value="Genomic_DNA"/>
</dbReference>
<dbReference type="RefSeq" id="WP_009871443.1">
    <property type="nucleotide sequence ID" value="NC_010280.2"/>
</dbReference>
<dbReference type="SMR" id="B0BB82"/>
<dbReference type="KEGG" id="ctl:CTLon_0346"/>
<dbReference type="HOGENOM" id="CLU_089475_6_3_0"/>
<dbReference type="Proteomes" id="UP001154401">
    <property type="component" value="Chromosome"/>
</dbReference>
<dbReference type="GO" id="GO:0005829">
    <property type="term" value="C:cytosol"/>
    <property type="evidence" value="ECO:0007669"/>
    <property type="project" value="TreeGrafter"/>
</dbReference>
<dbReference type="GO" id="GO:0043024">
    <property type="term" value="F:ribosomal small subunit binding"/>
    <property type="evidence" value="ECO:0007669"/>
    <property type="project" value="TreeGrafter"/>
</dbReference>
<dbReference type="GO" id="GO:0030490">
    <property type="term" value="P:maturation of SSU-rRNA"/>
    <property type="evidence" value="ECO:0007669"/>
    <property type="project" value="UniProtKB-UniRule"/>
</dbReference>
<dbReference type="FunFam" id="3.30.300.20:FF:000040">
    <property type="entry name" value="Ribosome-binding factor A"/>
    <property type="match status" value="1"/>
</dbReference>
<dbReference type="Gene3D" id="3.30.300.20">
    <property type="match status" value="1"/>
</dbReference>
<dbReference type="HAMAP" id="MF_00003">
    <property type="entry name" value="RbfA"/>
    <property type="match status" value="1"/>
</dbReference>
<dbReference type="InterPro" id="IPR015946">
    <property type="entry name" value="KH_dom-like_a/b"/>
</dbReference>
<dbReference type="InterPro" id="IPR000238">
    <property type="entry name" value="RbfA"/>
</dbReference>
<dbReference type="InterPro" id="IPR023799">
    <property type="entry name" value="RbfA_dom_sf"/>
</dbReference>
<dbReference type="NCBIfam" id="TIGR00082">
    <property type="entry name" value="rbfA"/>
    <property type="match status" value="1"/>
</dbReference>
<dbReference type="PANTHER" id="PTHR33515">
    <property type="entry name" value="RIBOSOME-BINDING FACTOR A, CHLOROPLASTIC-RELATED"/>
    <property type="match status" value="1"/>
</dbReference>
<dbReference type="PANTHER" id="PTHR33515:SF1">
    <property type="entry name" value="RIBOSOME-BINDING FACTOR A, CHLOROPLASTIC-RELATED"/>
    <property type="match status" value="1"/>
</dbReference>
<dbReference type="Pfam" id="PF02033">
    <property type="entry name" value="RBFA"/>
    <property type="match status" value="1"/>
</dbReference>
<dbReference type="SUPFAM" id="SSF89919">
    <property type="entry name" value="Ribosome-binding factor A, RbfA"/>
    <property type="match status" value="1"/>
</dbReference>
<comment type="function">
    <text evidence="1">One of several proteins that assist in the late maturation steps of the functional core of the 30S ribosomal subunit. Associates with free 30S ribosomal subunits (but not with 30S subunits that are part of 70S ribosomes or polysomes). Required for efficient processing of 16S rRNA. May interact with the 5'-terminal helix region of 16S rRNA.</text>
</comment>
<comment type="subunit">
    <text evidence="1">Monomer. Binds 30S ribosomal subunits, but not 50S ribosomal subunits or 70S ribosomes.</text>
</comment>
<comment type="subcellular location">
    <subcellularLocation>
        <location evidence="1">Cytoplasm</location>
    </subcellularLocation>
</comment>
<comment type="similarity">
    <text evidence="1">Belongs to the RbfA family.</text>
</comment>
<gene>
    <name evidence="1" type="primary">rbfA</name>
    <name type="ordered locus">CTLon_0346</name>
</gene>